<dbReference type="EC" id="2.5.1.-" evidence="5"/>
<dbReference type="EC" id="2.5.1.35" evidence="5"/>
<dbReference type="EMBL" id="CH476595">
    <property type="protein sequence ID" value="EAU38487.1"/>
    <property type="molecule type" value="Genomic_DNA"/>
</dbReference>
<dbReference type="RefSeq" id="XP_001209095.1">
    <property type="nucleotide sequence ID" value="XM_001209095.1"/>
</dbReference>
<dbReference type="SMR" id="Q0CX54"/>
<dbReference type="STRING" id="341663.Q0CX54"/>
<dbReference type="EnsemblFungi" id="EAU38487">
    <property type="protein sequence ID" value="EAU38487"/>
    <property type="gene ID" value="ATEG_01730"/>
</dbReference>
<dbReference type="GeneID" id="4315774"/>
<dbReference type="VEuPathDB" id="FungiDB:ATEG_01730"/>
<dbReference type="HOGENOM" id="CLU_037431_0_0_1"/>
<dbReference type="OMA" id="MHWKSHL"/>
<dbReference type="OrthoDB" id="5392033at2759"/>
<dbReference type="Proteomes" id="UP000007963">
    <property type="component" value="Unassembled WGS sequence"/>
</dbReference>
<dbReference type="GO" id="GO:0016765">
    <property type="term" value="F:transferase activity, transferring alkyl or aryl (other than methyl) groups"/>
    <property type="evidence" value="ECO:0007669"/>
    <property type="project" value="InterPro"/>
</dbReference>
<dbReference type="GO" id="GO:0009820">
    <property type="term" value="P:alkaloid metabolic process"/>
    <property type="evidence" value="ECO:0007669"/>
    <property type="project" value="InterPro"/>
</dbReference>
<dbReference type="CDD" id="cd13929">
    <property type="entry name" value="PT-DMATS_CymD"/>
    <property type="match status" value="1"/>
</dbReference>
<dbReference type="InterPro" id="IPR033964">
    <property type="entry name" value="Aro_prenylTrfase"/>
</dbReference>
<dbReference type="InterPro" id="IPR017795">
    <property type="entry name" value="Aro_prenylTrfase_DMATS"/>
</dbReference>
<dbReference type="NCBIfam" id="TIGR03429">
    <property type="entry name" value="arom_pren_DMATS"/>
    <property type="match status" value="1"/>
</dbReference>
<dbReference type="PANTHER" id="PTHR40627">
    <property type="entry name" value="INDOLE PRENYLTRANSFERASE TDIB-RELATED"/>
    <property type="match status" value="1"/>
</dbReference>
<dbReference type="PANTHER" id="PTHR40627:SF3">
    <property type="entry name" value="PRENYLTRANSFERASE ASQH2-RELATED"/>
    <property type="match status" value="1"/>
</dbReference>
<dbReference type="Pfam" id="PF11991">
    <property type="entry name" value="Trp_DMAT"/>
    <property type="match status" value="1"/>
</dbReference>
<dbReference type="SFLD" id="SFLDS00036">
    <property type="entry name" value="Aromatic_Prenyltransferase"/>
    <property type="match status" value="1"/>
</dbReference>
<accession>Q0CX54</accession>
<organism>
    <name type="scientific">Aspergillus terreus (strain NIH 2624 / FGSC A1156)</name>
    <dbReference type="NCBI Taxonomy" id="341663"/>
    <lineage>
        <taxon>Eukaryota</taxon>
        <taxon>Fungi</taxon>
        <taxon>Dikarya</taxon>
        <taxon>Ascomycota</taxon>
        <taxon>Pezizomycotina</taxon>
        <taxon>Eurotiomycetes</taxon>
        <taxon>Eurotiomycetidae</taxon>
        <taxon>Eurotiales</taxon>
        <taxon>Aspergillaceae</taxon>
        <taxon>Aspergillus</taxon>
        <taxon>Aspergillus subgen. Circumdati</taxon>
    </lineage>
</organism>
<evidence type="ECO:0000250" key="1">
    <source>
        <dbReference type="UniProtKB" id="Q50EL0"/>
    </source>
</evidence>
<evidence type="ECO:0000269" key="2">
    <source>
    </source>
</evidence>
<evidence type="ECO:0000303" key="3">
    <source>
    </source>
</evidence>
<evidence type="ECO:0000305" key="4"/>
<evidence type="ECO:0000305" key="5">
    <source>
    </source>
</evidence>
<feature type="chain" id="PRO_0000455465" description="Trans-prenyltransferase abpB">
    <location>
        <begin position="1"/>
        <end position="379"/>
    </location>
</feature>
<feature type="binding site" evidence="1">
    <location>
        <begin position="90"/>
        <end position="91"/>
    </location>
    <ligand>
        <name>substrate</name>
    </ligand>
</feature>
<feature type="binding site" evidence="1">
    <location>
        <position position="112"/>
    </location>
    <ligand>
        <name>substrate</name>
    </ligand>
</feature>
<feature type="binding site" evidence="1">
    <location>
        <position position="197"/>
    </location>
    <ligand>
        <name>substrate</name>
    </ligand>
</feature>
<feature type="binding site" evidence="1">
    <location>
        <position position="264"/>
    </location>
    <ligand>
        <name>substrate</name>
    </ligand>
</feature>
<feature type="binding site" evidence="1">
    <location>
        <position position="266"/>
    </location>
    <ligand>
        <name>substrate</name>
    </ligand>
</feature>
<feature type="binding site" evidence="1">
    <location>
        <position position="268"/>
    </location>
    <ligand>
        <name>substrate</name>
    </ligand>
</feature>
<feature type="binding site" evidence="1">
    <location>
        <position position="338"/>
    </location>
    <ligand>
        <name>substrate</name>
    </ligand>
</feature>
<keyword id="KW-1185">Reference proteome</keyword>
<keyword id="KW-0808">Transferase</keyword>
<name>ABPB_ASPTN</name>
<gene>
    <name evidence="3" type="primary">abpB</name>
    <name type="ORF">ATEG_01730</name>
</gene>
<sequence length="379" mass="42297">MTKSIIASEPPSAESSGRLPWKILGQTTGFPNQDQELWWLNTAPLLNEFLAECQYDVHLQYQYLTFFRHHVIPVLGPFFAPGTTPNFASRLSKHGHPLDFSVNFQESGATVRMSLGAIGSFAGLQQDPLNQFRAREVLDKLAILYPTVDLQLFKHFESEFGINHADALKVAAKLPKLDRATKMIAIDMLKNGSMTFKVYYMVRSKAAATGLPVHTVLFNAVQRLGSAFEPGLSLLKQFLSPLCDAGETDLGLLSFDCVPTESSRIKLYAIKQVGSLDAIRNLWTLGGTMDDPTTMKGLAVLEHVCELLQFGWSGDSRVQPILFNYEIKKGSTPKPQIYIPLADRYDEFDAAKLKAVFQDLDWKRVPFYQDTGKDLASVL</sequence>
<protein>
    <recommendedName>
        <fullName evidence="3">Trans-prenyltransferase abpB</fullName>
        <ecNumber evidence="5">2.5.1.-</ecNumber>
        <ecNumber evidence="5">2.5.1.35</ecNumber>
    </recommendedName>
    <alternativeName>
        <fullName evidence="3">Aspulvinone/butyrolactone prenyltransferase</fullName>
    </alternativeName>
</protein>
<comment type="function">
    <text evidence="2">Trans-prenyltransferase that acts in both the aspulvinones and butyrolactones pathways (PubMed:28791090). Prenylates aspulvinone E and butyrolactone II to yield repectively aspulvinone H and butyrolactone I (PubMed:28791090).</text>
</comment>
<comment type="catalytic activity">
    <reaction evidence="5">
        <text>aspulvinone E + 2 dimethylallyl diphosphate = aspulvinone H + 2 diphosphate</text>
        <dbReference type="Rhea" id="RHEA:13809"/>
        <dbReference type="ChEBI" id="CHEBI:33019"/>
        <dbReference type="ChEBI" id="CHEBI:57623"/>
        <dbReference type="ChEBI" id="CHEBI:58013"/>
        <dbReference type="ChEBI" id="CHEBI:58240"/>
        <dbReference type="EC" id="2.5.1.35"/>
    </reaction>
    <physiologicalReaction direction="left-to-right" evidence="5">
        <dbReference type="Rhea" id="RHEA:13810"/>
    </physiologicalReaction>
</comment>
<comment type="catalytic activity">
    <reaction evidence="2">
        <text>butyrolactone II + dimethylallyl diphosphate = butyrolactone I + diphosphate</text>
        <dbReference type="Rhea" id="RHEA:72903"/>
        <dbReference type="ChEBI" id="CHEBI:33019"/>
        <dbReference type="ChEBI" id="CHEBI:57623"/>
        <dbReference type="ChEBI" id="CHEBI:191395"/>
        <dbReference type="ChEBI" id="CHEBI:191397"/>
    </reaction>
    <physiologicalReaction direction="left-to-right" evidence="2">
        <dbReference type="Rhea" id="RHEA:72904"/>
    </physiologicalReaction>
</comment>
<comment type="pathway">
    <text evidence="2">Secondary metabolite biosynthesis.</text>
</comment>
<comment type="disruption phenotype">
    <text evidence="2">Leads to the accumulation of aspulvinone E and butyrolactone II.</text>
</comment>
<comment type="similarity">
    <text evidence="4">Belongs to the tryptophan dimethylallyltransferase family.</text>
</comment>
<proteinExistence type="inferred from homology"/>
<reference key="1">
    <citation type="submission" date="2005-09" db="EMBL/GenBank/DDBJ databases">
        <title>Annotation of the Aspergillus terreus NIH2624 genome.</title>
        <authorList>
            <person name="Birren B.W."/>
            <person name="Lander E.S."/>
            <person name="Galagan J.E."/>
            <person name="Nusbaum C."/>
            <person name="Devon K."/>
            <person name="Henn M."/>
            <person name="Ma L.-J."/>
            <person name="Jaffe D.B."/>
            <person name="Butler J."/>
            <person name="Alvarez P."/>
            <person name="Gnerre S."/>
            <person name="Grabherr M."/>
            <person name="Kleber M."/>
            <person name="Mauceli E.W."/>
            <person name="Brockman W."/>
            <person name="Rounsley S."/>
            <person name="Young S.K."/>
            <person name="LaButti K."/>
            <person name="Pushparaj V."/>
            <person name="DeCaprio D."/>
            <person name="Crawford M."/>
            <person name="Koehrsen M."/>
            <person name="Engels R."/>
            <person name="Montgomery P."/>
            <person name="Pearson M."/>
            <person name="Howarth C."/>
            <person name="Larson L."/>
            <person name="Luoma S."/>
            <person name="White J."/>
            <person name="Alvarado L."/>
            <person name="Kodira C.D."/>
            <person name="Zeng Q."/>
            <person name="Oleary S."/>
            <person name="Yandava C."/>
            <person name="Denning D.W."/>
            <person name="Nierman W.C."/>
            <person name="Milne T."/>
            <person name="Madden K."/>
        </authorList>
    </citation>
    <scope>NUCLEOTIDE SEQUENCE [LARGE SCALE GENOMIC DNA]</scope>
    <source>
        <strain>NIH 2624 / FGSC A1156</strain>
    </source>
</reference>
<reference key="2">
    <citation type="journal article" date="2015" name="Chem. Sci.">
        <title>Spatial regulation of a common precursor from two distinct genes generates metabolite diversity.</title>
        <authorList>
            <person name="Guo C.J."/>
            <person name="Sun W.W."/>
            <person name="Bruno K.S."/>
            <person name="Oakley B.R."/>
            <person name="Keller N.P."/>
            <person name="Wang C.C.C."/>
        </authorList>
    </citation>
    <scope>FUNCTION</scope>
    <scope>DISRUPTION PHENOTYPE</scope>
    <scope>PATHWAY</scope>
</reference>